<reference key="1">
    <citation type="journal article" date="2005" name="Science">
        <title>The genome of the basidiomycetous yeast and human pathogen Cryptococcus neoformans.</title>
        <authorList>
            <person name="Loftus B.J."/>
            <person name="Fung E."/>
            <person name="Roncaglia P."/>
            <person name="Rowley D."/>
            <person name="Amedeo P."/>
            <person name="Bruno D."/>
            <person name="Vamathevan J."/>
            <person name="Miranda M."/>
            <person name="Anderson I.J."/>
            <person name="Fraser J.A."/>
            <person name="Allen J.E."/>
            <person name="Bosdet I.E."/>
            <person name="Brent M.R."/>
            <person name="Chiu R."/>
            <person name="Doering T.L."/>
            <person name="Donlin M.J."/>
            <person name="D'Souza C.A."/>
            <person name="Fox D.S."/>
            <person name="Grinberg V."/>
            <person name="Fu J."/>
            <person name="Fukushima M."/>
            <person name="Haas B.J."/>
            <person name="Huang J.C."/>
            <person name="Janbon G."/>
            <person name="Jones S.J.M."/>
            <person name="Koo H.L."/>
            <person name="Krzywinski M.I."/>
            <person name="Kwon-Chung K.J."/>
            <person name="Lengeler K.B."/>
            <person name="Maiti R."/>
            <person name="Marra M.A."/>
            <person name="Marra R.E."/>
            <person name="Mathewson C.A."/>
            <person name="Mitchell T.G."/>
            <person name="Pertea M."/>
            <person name="Riggs F.R."/>
            <person name="Salzberg S.L."/>
            <person name="Schein J.E."/>
            <person name="Shvartsbeyn A."/>
            <person name="Shin H."/>
            <person name="Shumway M."/>
            <person name="Specht C.A."/>
            <person name="Suh B.B."/>
            <person name="Tenney A."/>
            <person name="Utterback T.R."/>
            <person name="Wickes B.L."/>
            <person name="Wortman J.R."/>
            <person name="Wye N.H."/>
            <person name="Kronstad J.W."/>
            <person name="Lodge J.K."/>
            <person name="Heitman J."/>
            <person name="Davis R.W."/>
            <person name="Fraser C.M."/>
            <person name="Hyman R.W."/>
        </authorList>
    </citation>
    <scope>NUCLEOTIDE SEQUENCE [LARGE SCALE GENOMIC DNA]</scope>
    <source>
        <strain>JEC21 / ATCC MYA-565</strain>
    </source>
</reference>
<organism>
    <name type="scientific">Cryptococcus neoformans var. neoformans serotype D (strain JEC21 / ATCC MYA-565)</name>
    <name type="common">Filobasidiella neoformans</name>
    <dbReference type="NCBI Taxonomy" id="214684"/>
    <lineage>
        <taxon>Eukaryota</taxon>
        <taxon>Fungi</taxon>
        <taxon>Dikarya</taxon>
        <taxon>Basidiomycota</taxon>
        <taxon>Agaricomycotina</taxon>
        <taxon>Tremellomycetes</taxon>
        <taxon>Tremellales</taxon>
        <taxon>Cryptococcaceae</taxon>
        <taxon>Cryptococcus</taxon>
        <taxon>Cryptococcus neoformans species complex</taxon>
    </lineage>
</organism>
<accession>P0CQ16</accession>
<accession>A0A0S2LII6</accession>
<accession>Q55U62</accession>
<accession>Q5KI83</accession>
<evidence type="ECO:0000255" key="1">
    <source>
        <dbReference type="HAMAP-Rule" id="MF_03120"/>
    </source>
</evidence>
<evidence type="ECO:0000255" key="2">
    <source>
        <dbReference type="PROSITE-ProRule" id="PRU01122"/>
    </source>
</evidence>
<evidence type="ECO:0000255" key="3">
    <source>
        <dbReference type="PROSITE-ProRule" id="PRU01123"/>
    </source>
</evidence>
<evidence type="ECO:0000256" key="4">
    <source>
        <dbReference type="SAM" id="MobiDB-lite"/>
    </source>
</evidence>
<keyword id="KW-0067">ATP-binding</keyword>
<keyword id="KW-0238">DNA-binding</keyword>
<keyword id="KW-0378">Hydrolase</keyword>
<keyword id="KW-0496">Mitochondrion</keyword>
<keyword id="KW-0547">Nucleotide-binding</keyword>
<keyword id="KW-0645">Protease</keyword>
<keyword id="KW-1185">Reference proteome</keyword>
<keyword id="KW-0720">Serine protease</keyword>
<keyword id="KW-0809">Transit peptide</keyword>
<dbReference type="EC" id="3.4.21.53" evidence="1"/>
<dbReference type="EMBL" id="AE017344">
    <property type="protein sequence ID" value="ALO60533.1"/>
    <property type="molecule type" value="Genomic_DNA"/>
</dbReference>
<dbReference type="RefSeq" id="XP_570626.1">
    <property type="nucleotide sequence ID" value="XM_570626.1"/>
</dbReference>
<dbReference type="SMR" id="P0CQ16"/>
<dbReference type="FunCoup" id="P0CQ16">
    <property type="interactions" value="249"/>
</dbReference>
<dbReference type="STRING" id="214684.P0CQ16"/>
<dbReference type="PaxDb" id="214684-P0CQ16"/>
<dbReference type="EnsemblFungi" id="ALO60533">
    <property type="protein sequence ID" value="ALO60533"/>
    <property type="gene ID" value="CND03865"/>
</dbReference>
<dbReference type="GeneID" id="3256968"/>
<dbReference type="KEGG" id="cne:CND03865"/>
<dbReference type="VEuPathDB" id="FungiDB:CND03865"/>
<dbReference type="eggNOG" id="KOG2004">
    <property type="taxonomic scope" value="Eukaryota"/>
</dbReference>
<dbReference type="eggNOG" id="KOG2910">
    <property type="taxonomic scope" value="Eukaryota"/>
</dbReference>
<dbReference type="InParanoid" id="P0CQ16"/>
<dbReference type="OrthoDB" id="2411602at2759"/>
<dbReference type="Proteomes" id="UP000002149">
    <property type="component" value="Chromosome 4"/>
</dbReference>
<dbReference type="GO" id="GO:0005759">
    <property type="term" value="C:mitochondrial matrix"/>
    <property type="evidence" value="ECO:0000318"/>
    <property type="project" value="GO_Central"/>
</dbReference>
<dbReference type="GO" id="GO:0005524">
    <property type="term" value="F:ATP binding"/>
    <property type="evidence" value="ECO:0007669"/>
    <property type="project" value="UniProtKB-UniRule"/>
</dbReference>
<dbReference type="GO" id="GO:0016887">
    <property type="term" value="F:ATP hydrolysis activity"/>
    <property type="evidence" value="ECO:0007669"/>
    <property type="project" value="UniProtKB-UniRule"/>
</dbReference>
<dbReference type="GO" id="GO:0004176">
    <property type="term" value="F:ATP-dependent peptidase activity"/>
    <property type="evidence" value="ECO:0000318"/>
    <property type="project" value="GO_Central"/>
</dbReference>
<dbReference type="GO" id="GO:0043565">
    <property type="term" value="F:sequence-specific DNA binding"/>
    <property type="evidence" value="ECO:0007669"/>
    <property type="project" value="UniProtKB-UniRule"/>
</dbReference>
<dbReference type="GO" id="GO:0004252">
    <property type="term" value="F:serine-type endopeptidase activity"/>
    <property type="evidence" value="ECO:0007669"/>
    <property type="project" value="UniProtKB-UniRule"/>
</dbReference>
<dbReference type="GO" id="GO:0003697">
    <property type="term" value="F:single-stranded DNA binding"/>
    <property type="evidence" value="ECO:0000318"/>
    <property type="project" value="GO_Central"/>
</dbReference>
<dbReference type="GO" id="GO:0034599">
    <property type="term" value="P:cellular response to oxidative stress"/>
    <property type="evidence" value="ECO:0007669"/>
    <property type="project" value="UniProtKB-UniRule"/>
</dbReference>
<dbReference type="GO" id="GO:0051131">
    <property type="term" value="P:chaperone-mediated protein complex assembly"/>
    <property type="evidence" value="ECO:0000318"/>
    <property type="project" value="GO_Central"/>
</dbReference>
<dbReference type="GO" id="GO:0007005">
    <property type="term" value="P:mitochondrion organization"/>
    <property type="evidence" value="ECO:0000318"/>
    <property type="project" value="GO_Central"/>
</dbReference>
<dbReference type="GO" id="GO:0070407">
    <property type="term" value="P:oxidation-dependent protein catabolic process"/>
    <property type="evidence" value="ECO:0007669"/>
    <property type="project" value="UniProtKB-UniRule"/>
</dbReference>
<dbReference type="GO" id="GO:0006515">
    <property type="term" value="P:protein quality control for misfolded or incompletely synthesized proteins"/>
    <property type="evidence" value="ECO:0000318"/>
    <property type="project" value="GO_Central"/>
</dbReference>
<dbReference type="CDD" id="cd19500">
    <property type="entry name" value="RecA-like_Lon"/>
    <property type="match status" value="1"/>
</dbReference>
<dbReference type="FunFam" id="3.40.50.300:FF:000021">
    <property type="entry name" value="Lon protease homolog"/>
    <property type="match status" value="1"/>
</dbReference>
<dbReference type="FunFam" id="3.30.230.10:FF:000019">
    <property type="entry name" value="Lon protease homolog 2, peroxisomal"/>
    <property type="match status" value="1"/>
</dbReference>
<dbReference type="FunFam" id="1.10.8.60:FF:000113">
    <property type="entry name" value="Lon protease homolog, mitochondrial"/>
    <property type="match status" value="1"/>
</dbReference>
<dbReference type="FunFam" id="1.20.5.5270:FF:000001">
    <property type="entry name" value="Lon protease homolog, mitochondrial"/>
    <property type="match status" value="1"/>
</dbReference>
<dbReference type="FunFam" id="1.20.58.1480:FF:000009">
    <property type="entry name" value="Lon protease homolog, mitochondrial"/>
    <property type="match status" value="1"/>
</dbReference>
<dbReference type="FunFam" id="2.30.130.40:FF:000010">
    <property type="entry name" value="Lon protease homolog, mitochondrial"/>
    <property type="match status" value="1"/>
</dbReference>
<dbReference type="Gene3D" id="1.10.8.60">
    <property type="match status" value="1"/>
</dbReference>
<dbReference type="Gene3D" id="1.20.5.5270">
    <property type="match status" value="1"/>
</dbReference>
<dbReference type="Gene3D" id="1.20.58.1480">
    <property type="match status" value="1"/>
</dbReference>
<dbReference type="Gene3D" id="3.30.230.10">
    <property type="match status" value="1"/>
</dbReference>
<dbReference type="Gene3D" id="2.30.130.40">
    <property type="entry name" value="LON domain-like"/>
    <property type="match status" value="1"/>
</dbReference>
<dbReference type="Gene3D" id="3.40.50.300">
    <property type="entry name" value="P-loop containing nucleotide triphosphate hydrolases"/>
    <property type="match status" value="1"/>
</dbReference>
<dbReference type="HAMAP" id="MF_03120">
    <property type="entry name" value="lonm_euk"/>
    <property type="match status" value="1"/>
</dbReference>
<dbReference type="InterPro" id="IPR003593">
    <property type="entry name" value="AAA+_ATPase"/>
</dbReference>
<dbReference type="InterPro" id="IPR003959">
    <property type="entry name" value="ATPase_AAA_core"/>
</dbReference>
<dbReference type="InterPro" id="IPR004815">
    <property type="entry name" value="Lon_bac/euk-typ"/>
</dbReference>
<dbReference type="InterPro" id="IPR054594">
    <property type="entry name" value="Lon_lid"/>
</dbReference>
<dbReference type="InterPro" id="IPR008269">
    <property type="entry name" value="Lon_proteolytic"/>
</dbReference>
<dbReference type="InterPro" id="IPR027065">
    <property type="entry name" value="Lon_Prtase"/>
</dbReference>
<dbReference type="InterPro" id="IPR003111">
    <property type="entry name" value="Lon_prtase_N"/>
</dbReference>
<dbReference type="InterPro" id="IPR046336">
    <property type="entry name" value="Lon_prtase_N_sf"/>
</dbReference>
<dbReference type="InterPro" id="IPR027503">
    <property type="entry name" value="Lonm_euk"/>
</dbReference>
<dbReference type="InterPro" id="IPR027417">
    <property type="entry name" value="P-loop_NTPase"/>
</dbReference>
<dbReference type="InterPro" id="IPR015947">
    <property type="entry name" value="PUA-like_sf"/>
</dbReference>
<dbReference type="InterPro" id="IPR020568">
    <property type="entry name" value="Ribosomal_Su5_D2-typ_SF"/>
</dbReference>
<dbReference type="InterPro" id="IPR014721">
    <property type="entry name" value="Ribsml_uS5_D2-typ_fold_subgr"/>
</dbReference>
<dbReference type="NCBIfam" id="TIGR00763">
    <property type="entry name" value="lon"/>
    <property type="match status" value="1"/>
</dbReference>
<dbReference type="PANTHER" id="PTHR43718">
    <property type="entry name" value="LON PROTEASE"/>
    <property type="match status" value="1"/>
</dbReference>
<dbReference type="PANTHER" id="PTHR43718:SF2">
    <property type="entry name" value="LON PROTEASE HOMOLOG, MITOCHONDRIAL"/>
    <property type="match status" value="1"/>
</dbReference>
<dbReference type="Pfam" id="PF00004">
    <property type="entry name" value="AAA"/>
    <property type="match status" value="1"/>
</dbReference>
<dbReference type="Pfam" id="PF05362">
    <property type="entry name" value="Lon_C"/>
    <property type="match status" value="1"/>
</dbReference>
<dbReference type="Pfam" id="PF22667">
    <property type="entry name" value="Lon_lid"/>
    <property type="match status" value="1"/>
</dbReference>
<dbReference type="Pfam" id="PF02190">
    <property type="entry name" value="LON_substr_bdg"/>
    <property type="match status" value="1"/>
</dbReference>
<dbReference type="PRINTS" id="PR00830">
    <property type="entry name" value="ENDOLAPTASE"/>
</dbReference>
<dbReference type="SMART" id="SM00382">
    <property type="entry name" value="AAA"/>
    <property type="match status" value="1"/>
</dbReference>
<dbReference type="SMART" id="SM00464">
    <property type="entry name" value="LON"/>
    <property type="match status" value="1"/>
</dbReference>
<dbReference type="SUPFAM" id="SSF52540">
    <property type="entry name" value="P-loop containing nucleoside triphosphate hydrolases"/>
    <property type="match status" value="1"/>
</dbReference>
<dbReference type="SUPFAM" id="SSF88697">
    <property type="entry name" value="PUA domain-like"/>
    <property type="match status" value="1"/>
</dbReference>
<dbReference type="SUPFAM" id="SSF54211">
    <property type="entry name" value="Ribosomal protein S5 domain 2-like"/>
    <property type="match status" value="1"/>
</dbReference>
<dbReference type="PROSITE" id="PS51787">
    <property type="entry name" value="LON_N"/>
    <property type="match status" value="1"/>
</dbReference>
<dbReference type="PROSITE" id="PS51786">
    <property type="entry name" value="LON_PROTEOLYTIC"/>
    <property type="match status" value="1"/>
</dbReference>
<name>LONM_CRYNJ</name>
<protein>
    <recommendedName>
        <fullName evidence="1">Lon protease homolog, mitochondrial</fullName>
        <ecNumber evidence="1">3.4.21.53</ecNumber>
    </recommendedName>
</protein>
<feature type="transit peptide" description="Mitochondrion" evidence="1">
    <location>
        <begin position="1"/>
        <end position="58"/>
    </location>
</feature>
<feature type="chain" id="PRO_0000395777" description="Lon protease homolog, mitochondrial">
    <location>
        <begin position="59"/>
        <end position="1104"/>
    </location>
</feature>
<feature type="domain" description="Lon N-terminal" evidence="3">
    <location>
        <begin position="155"/>
        <end position="444"/>
    </location>
</feature>
<feature type="domain" description="Lon proteolytic" evidence="2">
    <location>
        <begin position="895"/>
        <end position="1082"/>
    </location>
</feature>
<feature type="region of interest" description="Disordered" evidence="4">
    <location>
        <begin position="8"/>
        <end position="144"/>
    </location>
</feature>
<feature type="region of interest" description="Disordered" evidence="4">
    <location>
        <begin position="275"/>
        <end position="295"/>
    </location>
</feature>
<feature type="compositionally biased region" description="Low complexity" evidence="4">
    <location>
        <begin position="22"/>
        <end position="46"/>
    </location>
</feature>
<feature type="compositionally biased region" description="Basic and acidic residues" evidence="4">
    <location>
        <begin position="80"/>
        <end position="103"/>
    </location>
</feature>
<feature type="compositionally biased region" description="Low complexity" evidence="4">
    <location>
        <begin position="104"/>
        <end position="128"/>
    </location>
</feature>
<feature type="compositionally biased region" description="Gly residues" evidence="4">
    <location>
        <begin position="129"/>
        <end position="139"/>
    </location>
</feature>
<feature type="compositionally biased region" description="Basic and acidic residues" evidence="4">
    <location>
        <begin position="281"/>
        <end position="291"/>
    </location>
</feature>
<feature type="active site" evidence="1">
    <location>
        <position position="987"/>
    </location>
</feature>
<feature type="active site" evidence="1">
    <location>
        <position position="1030"/>
    </location>
</feature>
<feature type="binding site" evidence="1">
    <location>
        <begin position="597"/>
        <end position="604"/>
    </location>
    <ligand>
        <name>ATP</name>
        <dbReference type="ChEBI" id="CHEBI:30616"/>
    </ligand>
</feature>
<sequence length="1104" mass="120556">MLPLRAFARLAQRPRLSRPTQLARSSLPRPSPSRPAAHYLALAPAPSTRFLHSSPPVLKEKRWLNNTPPEDDGEDGQNPKQDDQVEKPLPDAESSKSAEERAKSQSSKPDIKASSSDSVSSSAPAPGSADGGSPPGAGGPKEVAKPVIPEIYPQVLAIPITHRPLFPGFYKAVTVRSPPVIKAIRELQAHGQPYVGAFLLKDSTVDSDVVTDINQVQPVGVFCQITSCFTSQEGEGKPEALTAVLFPHRRIKINELVKSSGTKGDGTVGVGGLVEGSQDSAKGEGEVKSFESEVPGVEEVREELGTVSIDSEQPDVHKENRDLETKEVTQIDFLHSLLPQVSLTNVSNLSIEPYEKDSQVIRAIMSELISVFKEIAQLQPMFREQVTSFAISNTSSQVFDEPDKLADLAAVVSTADVSDLQAVLSSTSIEDRLQRALVLLKKELINAQLQFKISRDVDTKIQKRQREYYLMEQLKGIKKELGMESDGKDKLVEGFKEKASKLAMPEGVRKVFDEELNKLVHLEPAASEFNVTRNYIDWLTQVPWGVHTPENYNISHAIKILDEDHYGLKDVKDRILEFMAIGKLRGSVEGKILCLVGPPGVGKTSIGKSIAKALGRQFFRFSVGGLTDVAEIKGHRRTYIGAMPGKPIQALKKVATENPLILIDEVDKISKAYNGDPASALLEMLDPEQNKSFLDHYLDVPIDLSKVLFVCTANVLETIPGPLLDRMEVLEVSGYVSAEKMNIAERYLSPQAKVAAGLEDVNIELEPGAIEALIRYYCRESGVRNLKKHIDKIYRKAAFKIVTDLGESGLPEPATPPAENQVEAQYPDIKPASELTYNVIPGTEVSGVDTKTDVTTVPREPMKVPAGIHVKVTQENLKDYVGPPLYHKDRLYTHSPPAGVSTGLGYLGNGSGAVMPVEINSMPGKGNLQLTGKLGEVIRESAQIAMSWVKSNAYLLGITKSEAEATLNDRDVHLHMPEGGIGKEGPSAGTAILTAFVSLFTKTRVDPDIAMTGEISLLGQVLPVGGLKEKILAAHRAGIKKLIVPAGCKPDIDENVPESVKGGIEFVFVEDVRQVLHEAFRGTEVEKRWQETLPMEEEPQRERH</sequence>
<comment type="function">
    <text evidence="1">ATP-dependent serine protease that mediates the selective degradation of misfolded, unassembled or oxidatively damaged polypeptides as well as certain short-lived regulatory proteins in the mitochondrial matrix. May also have a chaperone function in the assembly of inner membrane protein complexes. Participates in the regulation of mitochondrial gene expression and in the maintenance of the integrity of the mitochondrial genome. Binds to mitochondrial DNA in a site-specific manner.</text>
</comment>
<comment type="catalytic activity">
    <reaction evidence="1">
        <text>Hydrolysis of proteins in presence of ATP.</text>
        <dbReference type="EC" id="3.4.21.53"/>
    </reaction>
</comment>
<comment type="subunit">
    <text evidence="1">Homohexamer or homoheptamer. Organized in a ring with a central cavity.</text>
</comment>
<comment type="subcellular location">
    <subcellularLocation>
        <location evidence="1">Mitochondrion matrix</location>
    </subcellularLocation>
</comment>
<comment type="similarity">
    <text evidence="1">Belongs to the peptidase S16 family.</text>
</comment>
<gene>
    <name evidence="1" type="primary">PIM1</name>
    <name type="ordered locus">CND03860</name>
    <name type="ordered locus">CND03865</name>
</gene>
<proteinExistence type="inferred from homology"/>